<gene>
    <name evidence="1" type="primary">der</name>
    <name type="synonym">engA</name>
    <name type="ordered locus">CKO_00275</name>
</gene>
<keyword id="KW-0342">GTP-binding</keyword>
<keyword id="KW-0547">Nucleotide-binding</keyword>
<keyword id="KW-1185">Reference proteome</keyword>
<keyword id="KW-0677">Repeat</keyword>
<keyword id="KW-0690">Ribosome biogenesis</keyword>
<comment type="function">
    <text evidence="1">GTPase that plays an essential role in the late steps of ribosome biogenesis.</text>
</comment>
<comment type="subunit">
    <text evidence="1">Associates with the 50S ribosomal subunit.</text>
</comment>
<comment type="similarity">
    <text evidence="1">Belongs to the TRAFAC class TrmE-Era-EngA-EngB-Septin-like GTPase superfamily. EngA (Der) GTPase family.</text>
</comment>
<accession>A8AD75</accession>
<organism>
    <name type="scientific">Citrobacter koseri (strain ATCC BAA-895 / CDC 4225-83 / SGSC4696)</name>
    <dbReference type="NCBI Taxonomy" id="290338"/>
    <lineage>
        <taxon>Bacteria</taxon>
        <taxon>Pseudomonadati</taxon>
        <taxon>Pseudomonadota</taxon>
        <taxon>Gammaproteobacteria</taxon>
        <taxon>Enterobacterales</taxon>
        <taxon>Enterobacteriaceae</taxon>
        <taxon>Citrobacter</taxon>
    </lineage>
</organism>
<dbReference type="EMBL" id="CP000822">
    <property type="protein sequence ID" value="ABV11438.1"/>
    <property type="molecule type" value="Genomic_DNA"/>
</dbReference>
<dbReference type="RefSeq" id="WP_012131269.1">
    <property type="nucleotide sequence ID" value="NC_009792.1"/>
</dbReference>
<dbReference type="SMR" id="A8AD75"/>
<dbReference type="STRING" id="290338.CKO_00275"/>
<dbReference type="GeneID" id="45134553"/>
<dbReference type="KEGG" id="cko:CKO_00275"/>
<dbReference type="HOGENOM" id="CLU_016077_6_2_6"/>
<dbReference type="OrthoDB" id="9805918at2"/>
<dbReference type="Proteomes" id="UP000008148">
    <property type="component" value="Chromosome"/>
</dbReference>
<dbReference type="GO" id="GO:0005525">
    <property type="term" value="F:GTP binding"/>
    <property type="evidence" value="ECO:0007669"/>
    <property type="project" value="UniProtKB-UniRule"/>
</dbReference>
<dbReference type="GO" id="GO:0043022">
    <property type="term" value="F:ribosome binding"/>
    <property type="evidence" value="ECO:0007669"/>
    <property type="project" value="TreeGrafter"/>
</dbReference>
<dbReference type="GO" id="GO:0042254">
    <property type="term" value="P:ribosome biogenesis"/>
    <property type="evidence" value="ECO:0007669"/>
    <property type="project" value="UniProtKB-KW"/>
</dbReference>
<dbReference type="CDD" id="cd01894">
    <property type="entry name" value="EngA1"/>
    <property type="match status" value="1"/>
</dbReference>
<dbReference type="CDD" id="cd01895">
    <property type="entry name" value="EngA2"/>
    <property type="match status" value="1"/>
</dbReference>
<dbReference type="FunFam" id="3.30.300.20:FF:000004">
    <property type="entry name" value="GTPase Der"/>
    <property type="match status" value="1"/>
</dbReference>
<dbReference type="FunFam" id="3.40.50.300:FF:000040">
    <property type="entry name" value="GTPase Der"/>
    <property type="match status" value="1"/>
</dbReference>
<dbReference type="FunFam" id="3.40.50.300:FF:000057">
    <property type="entry name" value="GTPase Der"/>
    <property type="match status" value="1"/>
</dbReference>
<dbReference type="Gene3D" id="3.30.300.20">
    <property type="match status" value="1"/>
</dbReference>
<dbReference type="Gene3D" id="3.40.50.300">
    <property type="entry name" value="P-loop containing nucleotide triphosphate hydrolases"/>
    <property type="match status" value="2"/>
</dbReference>
<dbReference type="HAMAP" id="MF_00195">
    <property type="entry name" value="GTPase_Der"/>
    <property type="match status" value="1"/>
</dbReference>
<dbReference type="InterPro" id="IPR031166">
    <property type="entry name" value="G_ENGA"/>
</dbReference>
<dbReference type="InterPro" id="IPR006073">
    <property type="entry name" value="GTP-bd"/>
</dbReference>
<dbReference type="InterPro" id="IPR016484">
    <property type="entry name" value="GTPase_Der"/>
</dbReference>
<dbReference type="InterPro" id="IPR032859">
    <property type="entry name" value="KH_dom-like"/>
</dbReference>
<dbReference type="InterPro" id="IPR015946">
    <property type="entry name" value="KH_dom-like_a/b"/>
</dbReference>
<dbReference type="InterPro" id="IPR027417">
    <property type="entry name" value="P-loop_NTPase"/>
</dbReference>
<dbReference type="InterPro" id="IPR005225">
    <property type="entry name" value="Small_GTP-bd"/>
</dbReference>
<dbReference type="NCBIfam" id="TIGR03594">
    <property type="entry name" value="GTPase_EngA"/>
    <property type="match status" value="1"/>
</dbReference>
<dbReference type="NCBIfam" id="TIGR00231">
    <property type="entry name" value="small_GTP"/>
    <property type="match status" value="2"/>
</dbReference>
<dbReference type="PANTHER" id="PTHR43834">
    <property type="entry name" value="GTPASE DER"/>
    <property type="match status" value="1"/>
</dbReference>
<dbReference type="PANTHER" id="PTHR43834:SF6">
    <property type="entry name" value="GTPASE DER"/>
    <property type="match status" value="1"/>
</dbReference>
<dbReference type="Pfam" id="PF14714">
    <property type="entry name" value="KH_dom-like"/>
    <property type="match status" value="1"/>
</dbReference>
<dbReference type="Pfam" id="PF01926">
    <property type="entry name" value="MMR_HSR1"/>
    <property type="match status" value="2"/>
</dbReference>
<dbReference type="PIRSF" id="PIRSF006485">
    <property type="entry name" value="GTP-binding_EngA"/>
    <property type="match status" value="1"/>
</dbReference>
<dbReference type="PRINTS" id="PR00326">
    <property type="entry name" value="GTP1OBG"/>
</dbReference>
<dbReference type="SUPFAM" id="SSF52540">
    <property type="entry name" value="P-loop containing nucleoside triphosphate hydrolases"/>
    <property type="match status" value="2"/>
</dbReference>
<dbReference type="PROSITE" id="PS51712">
    <property type="entry name" value="G_ENGA"/>
    <property type="match status" value="2"/>
</dbReference>
<proteinExistence type="inferred from homology"/>
<feature type="chain" id="PRO_1000011604" description="GTPase Der">
    <location>
        <begin position="1"/>
        <end position="490"/>
    </location>
</feature>
<feature type="domain" description="EngA-type G 1">
    <location>
        <begin position="3"/>
        <end position="166"/>
    </location>
</feature>
<feature type="domain" description="EngA-type G 2">
    <location>
        <begin position="203"/>
        <end position="376"/>
    </location>
</feature>
<feature type="domain" description="KH-like" evidence="1">
    <location>
        <begin position="377"/>
        <end position="461"/>
    </location>
</feature>
<feature type="binding site" evidence="1">
    <location>
        <begin position="9"/>
        <end position="16"/>
    </location>
    <ligand>
        <name>GTP</name>
        <dbReference type="ChEBI" id="CHEBI:37565"/>
        <label>1</label>
    </ligand>
</feature>
<feature type="binding site" evidence="1">
    <location>
        <begin position="56"/>
        <end position="60"/>
    </location>
    <ligand>
        <name>GTP</name>
        <dbReference type="ChEBI" id="CHEBI:37565"/>
        <label>1</label>
    </ligand>
</feature>
<feature type="binding site" evidence="1">
    <location>
        <begin position="118"/>
        <end position="121"/>
    </location>
    <ligand>
        <name>GTP</name>
        <dbReference type="ChEBI" id="CHEBI:37565"/>
        <label>1</label>
    </ligand>
</feature>
<feature type="binding site" evidence="1">
    <location>
        <begin position="209"/>
        <end position="216"/>
    </location>
    <ligand>
        <name>GTP</name>
        <dbReference type="ChEBI" id="CHEBI:37565"/>
        <label>2</label>
    </ligand>
</feature>
<feature type="binding site" evidence="1">
    <location>
        <begin position="256"/>
        <end position="260"/>
    </location>
    <ligand>
        <name>GTP</name>
        <dbReference type="ChEBI" id="CHEBI:37565"/>
        <label>2</label>
    </ligand>
</feature>
<feature type="binding site" evidence="1">
    <location>
        <begin position="321"/>
        <end position="324"/>
    </location>
    <ligand>
        <name>GTP</name>
        <dbReference type="ChEBI" id="CHEBI:37565"/>
        <label>2</label>
    </ligand>
</feature>
<reference key="1">
    <citation type="submission" date="2007-08" db="EMBL/GenBank/DDBJ databases">
        <authorList>
            <consortium name="The Citrobacter koseri Genome Sequencing Project"/>
            <person name="McClelland M."/>
            <person name="Sanderson E.K."/>
            <person name="Porwollik S."/>
            <person name="Spieth J."/>
            <person name="Clifton W.S."/>
            <person name="Latreille P."/>
            <person name="Courtney L."/>
            <person name="Wang C."/>
            <person name="Pepin K."/>
            <person name="Bhonagiri V."/>
            <person name="Nash W."/>
            <person name="Johnson M."/>
            <person name="Thiruvilangam P."/>
            <person name="Wilson R."/>
        </authorList>
    </citation>
    <scope>NUCLEOTIDE SEQUENCE [LARGE SCALE GENOMIC DNA]</scope>
    <source>
        <strain>ATCC BAA-895 / CDC 4225-83 / SGSC4696</strain>
    </source>
</reference>
<name>DER_CITK8</name>
<protein>
    <recommendedName>
        <fullName evidence="1">GTPase Der</fullName>
    </recommendedName>
    <alternativeName>
        <fullName evidence="1">GTP-binding protein EngA</fullName>
    </alternativeName>
</protein>
<sequence>MVPVVALVGRPNVGKSTLFNRLTRTRDALVADFPGLTRDRKYGRAEIEGREFICIDTGGIDGTEDGVETRMAEQSLLAIEEADVVLFMVDARAGLMPADEAIAKHLRSREKPTFLVANKTDGLDPDQAVVDFYALGLGEIHPIAASHGRGVLSLLEHVLLPWMDDVAPQEEVDEDAEYWAKLAAEENGEEEPEDDFNPQDLPIKLAIVGRPNVGKSTLTNRILGEDRVVVYDMPGTTRDSIYIPMERDEREYVLIDTAGVRKRGKVTDAVEKFSVIKTLQAIEDANVVMLVIDAREGISDQDLSLLGFILNSGRSLVIVVNKWDGLTQEVKEQVKETLDFRLGFIDFARVHFISALHGSGVGNLFESVREAYDSSTRRVSTAMLTRIMAMAVEDHQPPLVRGRRVKLKYAHAGGYNPPIVVIHGNQVKDLPDSYKRYLMNYFRKSLDVMGTPIRIQFKEGENPYANKRNTLTPTQMRKRKRLIKHIKKSK</sequence>
<evidence type="ECO:0000255" key="1">
    <source>
        <dbReference type="HAMAP-Rule" id="MF_00195"/>
    </source>
</evidence>